<proteinExistence type="inferred from homology"/>
<evidence type="ECO:0000255" key="1">
    <source>
        <dbReference type="HAMAP-Rule" id="MF_00120"/>
    </source>
</evidence>
<keyword id="KW-0067">ATP-binding</keyword>
<keyword id="KW-0436">Ligase</keyword>
<keyword id="KW-0547">Nucleotide-binding</keyword>
<keyword id="KW-0648">Protein biosynthesis</keyword>
<keyword id="KW-1185">Reference proteome</keyword>
<organism>
    <name type="scientific">Oceanobacillus iheyensis (strain DSM 14371 / CIP 107618 / JCM 11309 / KCTC 3954 / HTE831)</name>
    <dbReference type="NCBI Taxonomy" id="221109"/>
    <lineage>
        <taxon>Bacteria</taxon>
        <taxon>Bacillati</taxon>
        <taxon>Bacillota</taxon>
        <taxon>Bacilli</taxon>
        <taxon>Bacillales</taxon>
        <taxon>Bacillaceae</taxon>
        <taxon>Oceanobacillus</taxon>
    </lineage>
</organism>
<feature type="chain" id="PRO_0000105185" description="Glutamyl-tRNA(Gln) amidotransferase subunit A">
    <location>
        <begin position="1"/>
        <end position="488"/>
    </location>
</feature>
<feature type="active site" description="Charge relay system" evidence="1">
    <location>
        <position position="76"/>
    </location>
</feature>
<feature type="active site" description="Charge relay system" evidence="1">
    <location>
        <position position="152"/>
    </location>
</feature>
<feature type="active site" description="Acyl-ester intermediate" evidence="1">
    <location>
        <position position="176"/>
    </location>
</feature>
<name>GATA_OCEIH</name>
<sequence length="488" mass="53587">MSLFDYTIKELEEKLHNKEITVEDLVKESYQRIHEVDQEVHAFLTLDEEKALEKARELDQLEDKTGILFGMPGGIKDNIVTKGLRTTCASQFLDNFNDPLYDATVVQKLQKENMVAVGKLNMDEFAMGSSNENSGYEPTRNPWNTEHVPGGSSGGSAAAVAAGEVLFTLGSDTGGSIRQPAAFCGVVGMKPTYGRVSRFGLVAFASSLDQIGPVTRTVEDNARVLEVIAGHDQMDTTSANVEVPSYTEALKQDVKGLKIAVPKEYLAEGVSKEVKDAILEALKVYESMGATWEEVSLPHSKYALATYYLLSSSEASANLARFDGVRYGVRSENADNMIDMFKKSRSEGFGEEVKRRIMLGTFALSSGYYDAYYKKAQKVRTLIKNDFDKILEEYDVIVGPTTPTPAFKVGEKTSDPLTMYANDILTIPVNLAGVPGISIPCGFSTEGLPIGLQIIGNYFDESTVYRTAYAYEQATEHHKKRPQLGGAK</sequence>
<reference key="1">
    <citation type="journal article" date="2002" name="Nucleic Acids Res.">
        <title>Genome sequence of Oceanobacillus iheyensis isolated from the Iheya Ridge and its unexpected adaptive capabilities to extreme environments.</title>
        <authorList>
            <person name="Takami H."/>
            <person name="Takaki Y."/>
            <person name="Uchiyama I."/>
        </authorList>
    </citation>
    <scope>NUCLEOTIDE SEQUENCE [LARGE SCALE GENOMIC DNA]</scope>
    <source>
        <strain>DSM 14371 / CIP 107618 / JCM 11309 / KCTC 3954 / HTE831</strain>
    </source>
</reference>
<comment type="function">
    <text evidence="1">Allows the formation of correctly charged Gln-tRNA(Gln) through the transamidation of misacylated Glu-tRNA(Gln) in organisms which lack glutaminyl-tRNA synthetase. The reaction takes place in the presence of glutamine and ATP through an activated gamma-phospho-Glu-tRNA(Gln).</text>
</comment>
<comment type="catalytic activity">
    <reaction evidence="1">
        <text>L-glutamyl-tRNA(Gln) + L-glutamine + ATP + H2O = L-glutaminyl-tRNA(Gln) + L-glutamate + ADP + phosphate + H(+)</text>
        <dbReference type="Rhea" id="RHEA:17521"/>
        <dbReference type="Rhea" id="RHEA-COMP:9681"/>
        <dbReference type="Rhea" id="RHEA-COMP:9684"/>
        <dbReference type="ChEBI" id="CHEBI:15377"/>
        <dbReference type="ChEBI" id="CHEBI:15378"/>
        <dbReference type="ChEBI" id="CHEBI:29985"/>
        <dbReference type="ChEBI" id="CHEBI:30616"/>
        <dbReference type="ChEBI" id="CHEBI:43474"/>
        <dbReference type="ChEBI" id="CHEBI:58359"/>
        <dbReference type="ChEBI" id="CHEBI:78520"/>
        <dbReference type="ChEBI" id="CHEBI:78521"/>
        <dbReference type="ChEBI" id="CHEBI:456216"/>
        <dbReference type="EC" id="6.3.5.7"/>
    </reaction>
</comment>
<comment type="subunit">
    <text evidence="1">Heterotrimer of A, B and C subunits.</text>
</comment>
<comment type="similarity">
    <text evidence="1">Belongs to the amidase family. GatA subfamily.</text>
</comment>
<dbReference type="EC" id="6.3.5.7" evidence="1"/>
<dbReference type="EMBL" id="BA000028">
    <property type="protein sequence ID" value="BAC12721.1"/>
    <property type="molecule type" value="Genomic_DNA"/>
</dbReference>
<dbReference type="RefSeq" id="WP_011065173.1">
    <property type="nucleotide sequence ID" value="NC_004193.1"/>
</dbReference>
<dbReference type="SMR" id="Q8ES78"/>
<dbReference type="STRING" id="221109.gene:10732986"/>
<dbReference type="KEGG" id="oih:OB0765"/>
<dbReference type="eggNOG" id="COG0154">
    <property type="taxonomic scope" value="Bacteria"/>
</dbReference>
<dbReference type="HOGENOM" id="CLU_009600_0_3_9"/>
<dbReference type="OrthoDB" id="9811471at2"/>
<dbReference type="PhylomeDB" id="Q8ES78"/>
<dbReference type="Proteomes" id="UP000000822">
    <property type="component" value="Chromosome"/>
</dbReference>
<dbReference type="GO" id="GO:0030956">
    <property type="term" value="C:glutamyl-tRNA(Gln) amidotransferase complex"/>
    <property type="evidence" value="ECO:0007669"/>
    <property type="project" value="InterPro"/>
</dbReference>
<dbReference type="GO" id="GO:0005524">
    <property type="term" value="F:ATP binding"/>
    <property type="evidence" value="ECO:0007669"/>
    <property type="project" value="UniProtKB-KW"/>
</dbReference>
<dbReference type="GO" id="GO:0050567">
    <property type="term" value="F:glutaminyl-tRNA synthase (glutamine-hydrolyzing) activity"/>
    <property type="evidence" value="ECO:0007669"/>
    <property type="project" value="UniProtKB-UniRule"/>
</dbReference>
<dbReference type="GO" id="GO:0006412">
    <property type="term" value="P:translation"/>
    <property type="evidence" value="ECO:0007669"/>
    <property type="project" value="UniProtKB-UniRule"/>
</dbReference>
<dbReference type="Gene3D" id="3.90.1300.10">
    <property type="entry name" value="Amidase signature (AS) domain"/>
    <property type="match status" value="1"/>
</dbReference>
<dbReference type="HAMAP" id="MF_00120">
    <property type="entry name" value="GatA"/>
    <property type="match status" value="1"/>
</dbReference>
<dbReference type="InterPro" id="IPR000120">
    <property type="entry name" value="Amidase"/>
</dbReference>
<dbReference type="InterPro" id="IPR020556">
    <property type="entry name" value="Amidase_CS"/>
</dbReference>
<dbReference type="InterPro" id="IPR023631">
    <property type="entry name" value="Amidase_dom"/>
</dbReference>
<dbReference type="InterPro" id="IPR036928">
    <property type="entry name" value="AS_sf"/>
</dbReference>
<dbReference type="InterPro" id="IPR004412">
    <property type="entry name" value="GatA"/>
</dbReference>
<dbReference type="NCBIfam" id="TIGR00132">
    <property type="entry name" value="gatA"/>
    <property type="match status" value="1"/>
</dbReference>
<dbReference type="PANTHER" id="PTHR11895:SF151">
    <property type="entry name" value="GLUTAMYL-TRNA(GLN) AMIDOTRANSFERASE SUBUNIT A"/>
    <property type="match status" value="1"/>
</dbReference>
<dbReference type="PANTHER" id="PTHR11895">
    <property type="entry name" value="TRANSAMIDASE"/>
    <property type="match status" value="1"/>
</dbReference>
<dbReference type="Pfam" id="PF01425">
    <property type="entry name" value="Amidase"/>
    <property type="match status" value="1"/>
</dbReference>
<dbReference type="SUPFAM" id="SSF75304">
    <property type="entry name" value="Amidase signature (AS) enzymes"/>
    <property type="match status" value="1"/>
</dbReference>
<dbReference type="PROSITE" id="PS00571">
    <property type="entry name" value="AMIDASES"/>
    <property type="match status" value="1"/>
</dbReference>
<protein>
    <recommendedName>
        <fullName evidence="1">Glutamyl-tRNA(Gln) amidotransferase subunit A</fullName>
        <shortName evidence="1">Glu-ADT subunit A</shortName>
        <ecNumber evidence="1">6.3.5.7</ecNumber>
    </recommendedName>
</protein>
<gene>
    <name evidence="1" type="primary">gatA</name>
    <name type="ordered locus">OB0765</name>
</gene>
<accession>Q8ES78</accession>